<gene>
    <name evidence="1" type="primary">gatC</name>
    <name type="ordered locus">MSMEG_2364</name>
    <name type="ordered locus">MSMEI_2304</name>
</gene>
<keyword id="KW-0067">ATP-binding</keyword>
<keyword id="KW-0436">Ligase</keyword>
<keyword id="KW-0547">Nucleotide-binding</keyword>
<keyword id="KW-0648">Protein biosynthesis</keyword>
<keyword id="KW-1185">Reference proteome</keyword>
<comment type="function">
    <text evidence="1">Allows the formation of correctly charged Asn-tRNA(Asn) or Gln-tRNA(Gln) through the transamidation of misacylated Asp-tRNA(Asn) or Glu-tRNA(Gln) in organisms which lack either or both of asparaginyl-tRNA or glutaminyl-tRNA synthetases. The reaction takes place in the presence of glutamine and ATP through an activated phospho-Asp-tRNA(Asn) or phospho-Glu-tRNA(Gln).</text>
</comment>
<comment type="catalytic activity">
    <reaction evidence="1">
        <text>L-glutamyl-tRNA(Gln) + L-glutamine + ATP + H2O = L-glutaminyl-tRNA(Gln) + L-glutamate + ADP + phosphate + H(+)</text>
        <dbReference type="Rhea" id="RHEA:17521"/>
        <dbReference type="Rhea" id="RHEA-COMP:9681"/>
        <dbReference type="Rhea" id="RHEA-COMP:9684"/>
        <dbReference type="ChEBI" id="CHEBI:15377"/>
        <dbReference type="ChEBI" id="CHEBI:15378"/>
        <dbReference type="ChEBI" id="CHEBI:29985"/>
        <dbReference type="ChEBI" id="CHEBI:30616"/>
        <dbReference type="ChEBI" id="CHEBI:43474"/>
        <dbReference type="ChEBI" id="CHEBI:58359"/>
        <dbReference type="ChEBI" id="CHEBI:78520"/>
        <dbReference type="ChEBI" id="CHEBI:78521"/>
        <dbReference type="ChEBI" id="CHEBI:456216"/>
    </reaction>
</comment>
<comment type="catalytic activity">
    <reaction evidence="1">
        <text>L-aspartyl-tRNA(Asn) + L-glutamine + ATP + H2O = L-asparaginyl-tRNA(Asn) + L-glutamate + ADP + phosphate + 2 H(+)</text>
        <dbReference type="Rhea" id="RHEA:14513"/>
        <dbReference type="Rhea" id="RHEA-COMP:9674"/>
        <dbReference type="Rhea" id="RHEA-COMP:9677"/>
        <dbReference type="ChEBI" id="CHEBI:15377"/>
        <dbReference type="ChEBI" id="CHEBI:15378"/>
        <dbReference type="ChEBI" id="CHEBI:29985"/>
        <dbReference type="ChEBI" id="CHEBI:30616"/>
        <dbReference type="ChEBI" id="CHEBI:43474"/>
        <dbReference type="ChEBI" id="CHEBI:58359"/>
        <dbReference type="ChEBI" id="CHEBI:78515"/>
        <dbReference type="ChEBI" id="CHEBI:78516"/>
        <dbReference type="ChEBI" id="CHEBI:456216"/>
    </reaction>
</comment>
<comment type="subunit">
    <text evidence="1">Heterotrimer of A, B and C subunits.</text>
</comment>
<comment type="similarity">
    <text evidence="1">Belongs to the GatC family.</text>
</comment>
<sequence length="99" mass="10557">MSQISRDEVAHLARLARLALTEDELDGFAGQLDAILGHVSQIQSVDVTGVEPTDNPLKDVNVTRPDTVQPCLTQDEALAAAPKAADGRFAVPRILGEPE</sequence>
<feature type="chain" id="PRO_1000016152" description="Aspartyl/glutamyl-tRNA(Asn/Gln) amidotransferase subunit C">
    <location>
        <begin position="1"/>
        <end position="99"/>
    </location>
</feature>
<protein>
    <recommendedName>
        <fullName evidence="1">Aspartyl/glutamyl-tRNA(Asn/Gln) amidotransferase subunit C</fullName>
        <shortName evidence="1">Asp/Glu-ADT subunit C</shortName>
        <ecNumber evidence="1">6.3.5.-</ecNumber>
    </recommendedName>
</protein>
<dbReference type="EC" id="6.3.5.-" evidence="1"/>
<dbReference type="EMBL" id="CP000480">
    <property type="protein sequence ID" value="ABK75542.1"/>
    <property type="molecule type" value="Genomic_DNA"/>
</dbReference>
<dbReference type="EMBL" id="CP001663">
    <property type="protein sequence ID" value="AFP38774.1"/>
    <property type="molecule type" value="Genomic_DNA"/>
</dbReference>
<dbReference type="RefSeq" id="WP_003893732.1">
    <property type="nucleotide sequence ID" value="NZ_SIJM01000012.1"/>
</dbReference>
<dbReference type="RefSeq" id="YP_886707.1">
    <property type="nucleotide sequence ID" value="NC_008596.1"/>
</dbReference>
<dbReference type="SMR" id="A0QUW9"/>
<dbReference type="STRING" id="246196.MSMEG_2364"/>
<dbReference type="PaxDb" id="246196-MSMEI_2304"/>
<dbReference type="GeneID" id="93457155"/>
<dbReference type="KEGG" id="msb:LJ00_11755"/>
<dbReference type="KEGG" id="msg:MSMEI_2304"/>
<dbReference type="KEGG" id="msm:MSMEG_2364"/>
<dbReference type="PATRIC" id="fig|246196.19.peg.2330"/>
<dbReference type="eggNOG" id="COG0721">
    <property type="taxonomic scope" value="Bacteria"/>
</dbReference>
<dbReference type="OrthoDB" id="5295223at2"/>
<dbReference type="Proteomes" id="UP000000757">
    <property type="component" value="Chromosome"/>
</dbReference>
<dbReference type="Proteomes" id="UP000006158">
    <property type="component" value="Chromosome"/>
</dbReference>
<dbReference type="GO" id="GO:0050566">
    <property type="term" value="F:asparaginyl-tRNA synthase (glutamine-hydrolyzing) activity"/>
    <property type="evidence" value="ECO:0007669"/>
    <property type="project" value="RHEA"/>
</dbReference>
<dbReference type="GO" id="GO:0005524">
    <property type="term" value="F:ATP binding"/>
    <property type="evidence" value="ECO:0007669"/>
    <property type="project" value="UniProtKB-KW"/>
</dbReference>
<dbReference type="GO" id="GO:0050567">
    <property type="term" value="F:glutaminyl-tRNA synthase (glutamine-hydrolyzing) activity"/>
    <property type="evidence" value="ECO:0007669"/>
    <property type="project" value="UniProtKB-UniRule"/>
</dbReference>
<dbReference type="GO" id="GO:0070681">
    <property type="term" value="P:glutaminyl-tRNAGln biosynthesis via transamidation"/>
    <property type="evidence" value="ECO:0007669"/>
    <property type="project" value="TreeGrafter"/>
</dbReference>
<dbReference type="GO" id="GO:0006450">
    <property type="term" value="P:regulation of translational fidelity"/>
    <property type="evidence" value="ECO:0007669"/>
    <property type="project" value="InterPro"/>
</dbReference>
<dbReference type="GO" id="GO:0006412">
    <property type="term" value="P:translation"/>
    <property type="evidence" value="ECO:0007669"/>
    <property type="project" value="UniProtKB-UniRule"/>
</dbReference>
<dbReference type="FunFam" id="1.10.20.60:FF:000001">
    <property type="entry name" value="Aspartyl/glutamyl-tRNA(Asn/Gln) amidotransferase subunit C"/>
    <property type="match status" value="1"/>
</dbReference>
<dbReference type="Gene3D" id="1.10.20.60">
    <property type="entry name" value="Glu-tRNAGln amidotransferase C subunit, N-terminal domain"/>
    <property type="match status" value="1"/>
</dbReference>
<dbReference type="HAMAP" id="MF_00122">
    <property type="entry name" value="GatC"/>
    <property type="match status" value="1"/>
</dbReference>
<dbReference type="InterPro" id="IPR036113">
    <property type="entry name" value="Asp/Glu-ADT_sf_sub_c"/>
</dbReference>
<dbReference type="InterPro" id="IPR003837">
    <property type="entry name" value="GatC"/>
</dbReference>
<dbReference type="NCBIfam" id="TIGR00135">
    <property type="entry name" value="gatC"/>
    <property type="match status" value="1"/>
</dbReference>
<dbReference type="PANTHER" id="PTHR15004">
    <property type="entry name" value="GLUTAMYL-TRNA(GLN) AMIDOTRANSFERASE SUBUNIT C, MITOCHONDRIAL"/>
    <property type="match status" value="1"/>
</dbReference>
<dbReference type="PANTHER" id="PTHR15004:SF0">
    <property type="entry name" value="GLUTAMYL-TRNA(GLN) AMIDOTRANSFERASE SUBUNIT C, MITOCHONDRIAL"/>
    <property type="match status" value="1"/>
</dbReference>
<dbReference type="Pfam" id="PF02686">
    <property type="entry name" value="GatC"/>
    <property type="match status" value="1"/>
</dbReference>
<dbReference type="SUPFAM" id="SSF141000">
    <property type="entry name" value="Glu-tRNAGln amidotransferase C subunit"/>
    <property type="match status" value="1"/>
</dbReference>
<proteinExistence type="inferred from homology"/>
<accession>A0QUW9</accession>
<accession>I7G803</accession>
<reference key="1">
    <citation type="submission" date="2006-10" db="EMBL/GenBank/DDBJ databases">
        <authorList>
            <person name="Fleischmann R.D."/>
            <person name="Dodson R.J."/>
            <person name="Haft D.H."/>
            <person name="Merkel J.S."/>
            <person name="Nelson W.C."/>
            <person name="Fraser C.M."/>
        </authorList>
    </citation>
    <scope>NUCLEOTIDE SEQUENCE [LARGE SCALE GENOMIC DNA]</scope>
    <source>
        <strain>ATCC 700084 / mc(2)155</strain>
    </source>
</reference>
<reference key="2">
    <citation type="journal article" date="2007" name="Genome Biol.">
        <title>Interrupted coding sequences in Mycobacterium smegmatis: authentic mutations or sequencing errors?</title>
        <authorList>
            <person name="Deshayes C."/>
            <person name="Perrodou E."/>
            <person name="Gallien S."/>
            <person name="Euphrasie D."/>
            <person name="Schaeffer C."/>
            <person name="Van-Dorsselaer A."/>
            <person name="Poch O."/>
            <person name="Lecompte O."/>
            <person name="Reyrat J.-M."/>
        </authorList>
    </citation>
    <scope>NUCLEOTIDE SEQUENCE [LARGE SCALE GENOMIC DNA]</scope>
    <source>
        <strain>ATCC 700084 / mc(2)155</strain>
    </source>
</reference>
<reference key="3">
    <citation type="journal article" date="2009" name="Genome Res.">
        <title>Ortho-proteogenomics: multiple proteomes investigation through orthology and a new MS-based protocol.</title>
        <authorList>
            <person name="Gallien S."/>
            <person name="Perrodou E."/>
            <person name="Carapito C."/>
            <person name="Deshayes C."/>
            <person name="Reyrat J.-M."/>
            <person name="Van Dorsselaer A."/>
            <person name="Poch O."/>
            <person name="Schaeffer C."/>
            <person name="Lecompte O."/>
        </authorList>
    </citation>
    <scope>NUCLEOTIDE SEQUENCE [LARGE SCALE GENOMIC DNA]</scope>
    <source>
        <strain>ATCC 700084 / mc(2)155</strain>
    </source>
</reference>
<organism>
    <name type="scientific">Mycolicibacterium smegmatis (strain ATCC 700084 / mc(2)155)</name>
    <name type="common">Mycobacterium smegmatis</name>
    <dbReference type="NCBI Taxonomy" id="246196"/>
    <lineage>
        <taxon>Bacteria</taxon>
        <taxon>Bacillati</taxon>
        <taxon>Actinomycetota</taxon>
        <taxon>Actinomycetes</taxon>
        <taxon>Mycobacteriales</taxon>
        <taxon>Mycobacteriaceae</taxon>
        <taxon>Mycolicibacterium</taxon>
    </lineage>
</organism>
<name>GATC_MYCS2</name>
<evidence type="ECO:0000255" key="1">
    <source>
        <dbReference type="HAMAP-Rule" id="MF_00122"/>
    </source>
</evidence>